<evidence type="ECO:0000255" key="1">
    <source>
        <dbReference type="HAMAP-Rule" id="MF_01552"/>
    </source>
</evidence>
<keyword id="KW-0067">ATP-binding</keyword>
<keyword id="KW-0436">Ligase</keyword>
<keyword id="KW-0460">Magnesium</keyword>
<keyword id="KW-0464">Manganese</keyword>
<keyword id="KW-0479">Metal-binding</keyword>
<keyword id="KW-0547">Nucleotide-binding</keyword>
<keyword id="KW-0648">Protein biosynthesis</keyword>
<dbReference type="EC" id="6.3.2.-" evidence="1"/>
<dbReference type="EMBL" id="CP001020">
    <property type="protein sequence ID" value="ACJ20952.1"/>
    <property type="molecule type" value="Genomic_DNA"/>
</dbReference>
<dbReference type="RefSeq" id="WP_005769646.1">
    <property type="nucleotide sequence ID" value="NC_011528.1"/>
</dbReference>
<dbReference type="SMR" id="B6J535"/>
<dbReference type="KEGG" id="cbc:CbuK_1831"/>
<dbReference type="HOGENOM" id="CLU_054353_0_1_6"/>
<dbReference type="GO" id="GO:0005737">
    <property type="term" value="C:cytoplasm"/>
    <property type="evidence" value="ECO:0007669"/>
    <property type="project" value="TreeGrafter"/>
</dbReference>
<dbReference type="GO" id="GO:0005524">
    <property type="term" value="F:ATP binding"/>
    <property type="evidence" value="ECO:0007669"/>
    <property type="project" value="UniProtKB-UniRule"/>
</dbReference>
<dbReference type="GO" id="GO:0046872">
    <property type="term" value="F:metal ion binding"/>
    <property type="evidence" value="ECO:0007669"/>
    <property type="project" value="UniProtKB-KW"/>
</dbReference>
<dbReference type="GO" id="GO:0018169">
    <property type="term" value="F:ribosomal S6-glutamic acid ligase activity"/>
    <property type="evidence" value="ECO:0007669"/>
    <property type="project" value="TreeGrafter"/>
</dbReference>
<dbReference type="GO" id="GO:0036211">
    <property type="term" value="P:protein modification process"/>
    <property type="evidence" value="ECO:0007669"/>
    <property type="project" value="InterPro"/>
</dbReference>
<dbReference type="GO" id="GO:0009432">
    <property type="term" value="P:SOS response"/>
    <property type="evidence" value="ECO:0007669"/>
    <property type="project" value="TreeGrafter"/>
</dbReference>
<dbReference type="GO" id="GO:0006412">
    <property type="term" value="P:translation"/>
    <property type="evidence" value="ECO:0007669"/>
    <property type="project" value="UniProtKB-KW"/>
</dbReference>
<dbReference type="FunFam" id="3.40.50.20:FF:000004">
    <property type="entry name" value="Probable alpha-L-glutamate ligase"/>
    <property type="match status" value="1"/>
</dbReference>
<dbReference type="FunFam" id="3.30.1490.20:FF:000005">
    <property type="entry name" value="Probable alpha-L-glutamate ligase 1"/>
    <property type="match status" value="1"/>
</dbReference>
<dbReference type="FunFam" id="3.30.470.20:FF:000016">
    <property type="entry name" value="Ribosomal protein S6--L-glutamate ligase"/>
    <property type="match status" value="1"/>
</dbReference>
<dbReference type="Gene3D" id="3.40.50.20">
    <property type="match status" value="1"/>
</dbReference>
<dbReference type="Gene3D" id="3.30.1490.20">
    <property type="entry name" value="ATP-grasp fold, A domain"/>
    <property type="match status" value="1"/>
</dbReference>
<dbReference type="Gene3D" id="3.30.470.20">
    <property type="entry name" value="ATP-grasp fold, B domain"/>
    <property type="match status" value="1"/>
</dbReference>
<dbReference type="HAMAP" id="MF_01552">
    <property type="entry name" value="RimK"/>
    <property type="match status" value="1"/>
</dbReference>
<dbReference type="InterPro" id="IPR011761">
    <property type="entry name" value="ATP-grasp"/>
</dbReference>
<dbReference type="InterPro" id="IPR013651">
    <property type="entry name" value="ATP-grasp_RimK-type"/>
</dbReference>
<dbReference type="InterPro" id="IPR013815">
    <property type="entry name" value="ATP_grasp_subdomain_1"/>
</dbReference>
<dbReference type="InterPro" id="IPR023533">
    <property type="entry name" value="RimK"/>
</dbReference>
<dbReference type="InterPro" id="IPR041107">
    <property type="entry name" value="Rimk_N"/>
</dbReference>
<dbReference type="InterPro" id="IPR004666">
    <property type="entry name" value="Rp_bS6_RimK/Lys_biosynth_LsyX"/>
</dbReference>
<dbReference type="NCBIfam" id="NF007764">
    <property type="entry name" value="PRK10446.1"/>
    <property type="match status" value="1"/>
</dbReference>
<dbReference type="NCBIfam" id="TIGR00768">
    <property type="entry name" value="rimK_fam"/>
    <property type="match status" value="1"/>
</dbReference>
<dbReference type="PANTHER" id="PTHR21621:SF7">
    <property type="entry name" value="RIBOSOMAL PROTEIN BS6--L-GLUTAMATE LIGASE"/>
    <property type="match status" value="1"/>
</dbReference>
<dbReference type="PANTHER" id="PTHR21621">
    <property type="entry name" value="RIBOSOMAL PROTEIN S6 MODIFICATION PROTEIN"/>
    <property type="match status" value="1"/>
</dbReference>
<dbReference type="Pfam" id="PF08443">
    <property type="entry name" value="RimK"/>
    <property type="match status" value="1"/>
</dbReference>
<dbReference type="Pfam" id="PF18030">
    <property type="entry name" value="Rimk_N"/>
    <property type="match status" value="1"/>
</dbReference>
<dbReference type="SUPFAM" id="SSF56059">
    <property type="entry name" value="Glutathione synthetase ATP-binding domain-like"/>
    <property type="match status" value="1"/>
</dbReference>
<dbReference type="PROSITE" id="PS50975">
    <property type="entry name" value="ATP_GRASP"/>
    <property type="match status" value="1"/>
</dbReference>
<name>RIMK_COXB1</name>
<proteinExistence type="inferred from homology"/>
<gene>
    <name evidence="1" type="primary">rimK</name>
    <name type="ordered locus">CbuK_1831</name>
</gene>
<reference key="1">
    <citation type="journal article" date="2009" name="Infect. Immun.">
        <title>Comparative genomics reveal extensive transposon-mediated genomic plasticity and diversity among potential effector proteins within the genus Coxiella.</title>
        <authorList>
            <person name="Beare P.A."/>
            <person name="Unsworth N."/>
            <person name="Andoh M."/>
            <person name="Voth D.E."/>
            <person name="Omsland A."/>
            <person name="Gilk S.D."/>
            <person name="Williams K.P."/>
            <person name="Sobral B.W."/>
            <person name="Kupko J.J. III"/>
            <person name="Porcella S.F."/>
            <person name="Samuel J.E."/>
            <person name="Heinzen R.A."/>
        </authorList>
    </citation>
    <scope>NUCLEOTIDE SEQUENCE [LARGE SCALE GENOMIC DNA]</scope>
    <source>
        <strain>CbuK_Q154</strain>
    </source>
</reference>
<feature type="chain" id="PRO_1000194362" description="Probable alpha-L-glutamate ligase">
    <location>
        <begin position="1"/>
        <end position="301"/>
    </location>
</feature>
<feature type="domain" description="ATP-grasp" evidence="1">
    <location>
        <begin position="104"/>
        <end position="287"/>
    </location>
</feature>
<feature type="binding site" evidence="1">
    <location>
        <position position="141"/>
    </location>
    <ligand>
        <name>ATP</name>
        <dbReference type="ChEBI" id="CHEBI:30616"/>
    </ligand>
</feature>
<feature type="binding site" evidence="1">
    <location>
        <begin position="178"/>
        <end position="179"/>
    </location>
    <ligand>
        <name>ATP</name>
        <dbReference type="ChEBI" id="CHEBI:30616"/>
    </ligand>
</feature>
<feature type="binding site" evidence="1">
    <location>
        <position position="187"/>
    </location>
    <ligand>
        <name>ATP</name>
        <dbReference type="ChEBI" id="CHEBI:30616"/>
    </ligand>
</feature>
<feature type="binding site" evidence="1">
    <location>
        <begin position="211"/>
        <end position="213"/>
    </location>
    <ligand>
        <name>ATP</name>
        <dbReference type="ChEBI" id="CHEBI:30616"/>
    </ligand>
</feature>
<feature type="binding site" evidence="1">
    <location>
        <position position="248"/>
    </location>
    <ligand>
        <name>Mg(2+)</name>
        <dbReference type="ChEBI" id="CHEBI:18420"/>
        <label>1</label>
    </ligand>
</feature>
<feature type="binding site" evidence="1">
    <location>
        <position position="248"/>
    </location>
    <ligand>
        <name>Mn(2+)</name>
        <dbReference type="ChEBI" id="CHEBI:29035"/>
        <label>1</label>
    </ligand>
</feature>
<feature type="binding site" evidence="1">
    <location>
        <position position="260"/>
    </location>
    <ligand>
        <name>Mg(2+)</name>
        <dbReference type="ChEBI" id="CHEBI:18420"/>
        <label>1</label>
    </ligand>
</feature>
<feature type="binding site" evidence="1">
    <location>
        <position position="260"/>
    </location>
    <ligand>
        <name>Mg(2+)</name>
        <dbReference type="ChEBI" id="CHEBI:18420"/>
        <label>2</label>
    </ligand>
</feature>
<feature type="binding site" evidence="1">
    <location>
        <position position="260"/>
    </location>
    <ligand>
        <name>Mn(2+)</name>
        <dbReference type="ChEBI" id="CHEBI:29035"/>
        <label>1</label>
    </ligand>
</feature>
<feature type="binding site" evidence="1">
    <location>
        <position position="260"/>
    </location>
    <ligand>
        <name>Mn(2+)</name>
        <dbReference type="ChEBI" id="CHEBI:29035"/>
        <label>2</label>
    </ligand>
</feature>
<feature type="binding site" evidence="1">
    <location>
        <position position="262"/>
    </location>
    <ligand>
        <name>Mg(2+)</name>
        <dbReference type="ChEBI" id="CHEBI:18420"/>
        <label>2</label>
    </ligand>
</feature>
<feature type="binding site" evidence="1">
    <location>
        <position position="262"/>
    </location>
    <ligand>
        <name>Mn(2+)</name>
        <dbReference type="ChEBI" id="CHEBI:29035"/>
        <label>2</label>
    </ligand>
</feature>
<sequence>MKIAILSTKQELSSTQRLKEAALARGHKVKIINTLRCYMSLSQEKPTIHYMGKELARYDAVIPRIGASITFYGTAVVRQFEMMGTFCLNSSMSITRSRDKFRSLQFLSRKGIDLPITGFAHSPDDIEDLIQMVGGTPLIIKLIEGTQGIGVVLAETKKAAESVIQAFLGLKVNILIQEFIGETQGRDIRCFVIGNKVVATMQREARPGDFRSNVHRGGTTKLIKITPQEREISINAAKALGLNVAGVDLLRSKRGPLVLEVNSSPGLEGIENITKKDIAGMIIEFIEKNAKPIKAYSRYQG</sequence>
<organism>
    <name type="scientific">Coxiella burnetii (strain CbuK_Q154)</name>
    <name type="common">Coxiella burnetii (strain Q154)</name>
    <dbReference type="NCBI Taxonomy" id="434924"/>
    <lineage>
        <taxon>Bacteria</taxon>
        <taxon>Pseudomonadati</taxon>
        <taxon>Pseudomonadota</taxon>
        <taxon>Gammaproteobacteria</taxon>
        <taxon>Legionellales</taxon>
        <taxon>Coxiellaceae</taxon>
        <taxon>Coxiella</taxon>
    </lineage>
</organism>
<protein>
    <recommendedName>
        <fullName evidence="1">Probable alpha-L-glutamate ligase</fullName>
        <ecNumber evidence="1">6.3.2.-</ecNumber>
    </recommendedName>
</protein>
<accession>B6J535</accession>
<comment type="cofactor">
    <cofactor evidence="1">
        <name>Mg(2+)</name>
        <dbReference type="ChEBI" id="CHEBI:18420"/>
    </cofactor>
    <cofactor evidence="1">
        <name>Mn(2+)</name>
        <dbReference type="ChEBI" id="CHEBI:29035"/>
    </cofactor>
    <text evidence="1">Binds 2 magnesium or manganese ions per subunit.</text>
</comment>
<comment type="similarity">
    <text evidence="1">Belongs to the RimK family.</text>
</comment>